<gene>
    <name type="primary">FYTTD1</name>
    <name type="synonym">UIF</name>
</gene>
<comment type="function">
    <text evidence="1">Required for mRNA export from the nucleus to the cytoplasm. Acts as an adapter that uses the DDX39B/UAP56-NFX1 pathway to ensure efficient mRNA export and delivering to the nuclear pore. Associates with spliced and unspliced mRNAs simultaneously with ALYREF/THOC4 (By similarity).</text>
</comment>
<comment type="subunit">
    <text evidence="1">Interacts with DDX39B/UAP56 and NXF1; interaction with DDX39B/UAP56 and NXF1 are mutually exclusive. Interacts with SSRP1; required for its recruitment to mRNAs. Interacts with CHTOP (By similarity).</text>
</comment>
<comment type="subcellular location">
    <subcellularLocation>
        <location evidence="1">Nucleus</location>
        <location evidence="1">Nucleoplasm</location>
    </subcellularLocation>
    <subcellularLocation>
        <location evidence="1">Nucleus speckle</location>
    </subcellularLocation>
</comment>
<comment type="similarity">
    <text evidence="5">Belongs to the UIF family.</text>
</comment>
<comment type="sequence caution" evidence="5">
    <conflict type="frameshift">
        <sequence resource="EMBL-CDS" id="CAC51428"/>
    </conflict>
</comment>
<feature type="chain" id="PRO_0000287440" description="UAP56-interacting factor">
    <location>
        <begin position="1"/>
        <end position="318"/>
    </location>
</feature>
<feature type="region of interest" description="Disordered" evidence="4">
    <location>
        <begin position="1"/>
        <end position="27"/>
    </location>
</feature>
<feature type="region of interest" description="Disordered" evidence="4">
    <location>
        <begin position="163"/>
        <end position="183"/>
    </location>
</feature>
<feature type="short sequence motif" description="UAP56-binding motif">
    <location>
        <begin position="27"/>
        <end position="45"/>
    </location>
</feature>
<feature type="compositionally biased region" description="Polar residues" evidence="4">
    <location>
        <begin position="163"/>
        <end position="180"/>
    </location>
</feature>
<feature type="modified residue" description="N-acetylmethionine" evidence="3">
    <location>
        <position position="1"/>
    </location>
</feature>
<feature type="modified residue" description="Phosphothreonine" evidence="2">
    <location>
        <position position="14"/>
    </location>
</feature>
<feature type="modified residue" description="Phosphoserine" evidence="3">
    <location>
        <position position="24"/>
    </location>
</feature>
<feature type="modified residue" description="Phosphoserine" evidence="3">
    <location>
        <position position="61"/>
    </location>
</feature>
<feature type="modified residue" description="Phosphoserine" evidence="3">
    <location>
        <position position="118"/>
    </location>
</feature>
<feature type="cross-link" description="Glycyl lysine isopeptide (Lys-Gly) (interchain with G-Cter in SUMO1)" evidence="3">
    <location>
        <position position="140"/>
    </location>
</feature>
<feature type="cross-link" description="Glycyl lysine isopeptide (Lys-Gly) (interchain with G-Cter in SUMO2)" evidence="3">
    <location>
        <position position="261"/>
    </location>
</feature>
<feature type="sequence conflict" description="In Ref. 1; CAC51428." evidence="5" ref="1">
    <original>R</original>
    <variation>G</variation>
    <location>
        <position position="195"/>
    </location>
</feature>
<accession>Q17QU6</accession>
<accession>Q95M42</accession>
<dbReference type="EMBL" id="AJ344095">
    <property type="protein sequence ID" value="CAC51428.1"/>
    <property type="status" value="ALT_FRAME"/>
    <property type="molecule type" value="mRNA"/>
</dbReference>
<dbReference type="EMBL" id="BC118174">
    <property type="protein sequence ID" value="AAI18175.1"/>
    <property type="molecule type" value="mRNA"/>
</dbReference>
<dbReference type="RefSeq" id="NP_001001137.2">
    <property type="nucleotide sequence ID" value="NM_001001137.2"/>
</dbReference>
<dbReference type="SMR" id="Q17QU6"/>
<dbReference type="FunCoup" id="Q17QU6">
    <property type="interactions" value="2078"/>
</dbReference>
<dbReference type="STRING" id="9913.ENSBTAP00000043895"/>
<dbReference type="PaxDb" id="9913-ENSBTAP00000043895"/>
<dbReference type="Ensembl" id="ENSBTAT00000046614.3">
    <property type="protein sequence ID" value="ENSBTAP00000043895.1"/>
    <property type="gene ID" value="ENSBTAG00000014874.6"/>
</dbReference>
<dbReference type="GeneID" id="407149"/>
<dbReference type="KEGG" id="bta:407149"/>
<dbReference type="CTD" id="84248"/>
<dbReference type="VEuPathDB" id="HostDB:ENSBTAG00000014874"/>
<dbReference type="VGNC" id="VGNC:29164">
    <property type="gene designation" value="FYTTD1"/>
</dbReference>
<dbReference type="eggNOG" id="ENOG502QWD4">
    <property type="taxonomic scope" value="Eukaryota"/>
</dbReference>
<dbReference type="GeneTree" id="ENSGT00390000012807"/>
<dbReference type="HOGENOM" id="CLU_076911_0_0_1"/>
<dbReference type="InParanoid" id="Q17QU6"/>
<dbReference type="OMA" id="NGTRQFR"/>
<dbReference type="OrthoDB" id="9938627at2759"/>
<dbReference type="TreeFam" id="TF336232"/>
<dbReference type="Reactome" id="R-BTA-159236">
    <property type="pathway name" value="Transport of Mature mRNA derived from an Intron-Containing Transcript"/>
</dbReference>
<dbReference type="Reactome" id="R-BTA-72187">
    <property type="pathway name" value="mRNA 3'-end processing"/>
</dbReference>
<dbReference type="Reactome" id="R-BTA-73856">
    <property type="pathway name" value="RNA Polymerase II Transcription Termination"/>
</dbReference>
<dbReference type="Proteomes" id="UP000009136">
    <property type="component" value="Chromosome 1"/>
</dbReference>
<dbReference type="Bgee" id="ENSBTAG00000014874">
    <property type="expression patterns" value="Expressed in spermatocyte and 108 other cell types or tissues"/>
</dbReference>
<dbReference type="GO" id="GO:0005829">
    <property type="term" value="C:cytosol"/>
    <property type="evidence" value="ECO:0007669"/>
    <property type="project" value="Ensembl"/>
</dbReference>
<dbReference type="GO" id="GO:0016607">
    <property type="term" value="C:nuclear speck"/>
    <property type="evidence" value="ECO:0000250"/>
    <property type="project" value="UniProtKB"/>
</dbReference>
<dbReference type="GO" id="GO:0005730">
    <property type="term" value="C:nucleolus"/>
    <property type="evidence" value="ECO:0007669"/>
    <property type="project" value="Ensembl"/>
</dbReference>
<dbReference type="GO" id="GO:0005654">
    <property type="term" value="C:nucleoplasm"/>
    <property type="evidence" value="ECO:0000250"/>
    <property type="project" value="UniProtKB"/>
</dbReference>
<dbReference type="GO" id="GO:0003729">
    <property type="term" value="F:mRNA binding"/>
    <property type="evidence" value="ECO:0000250"/>
    <property type="project" value="UniProtKB"/>
</dbReference>
<dbReference type="GO" id="GO:0006406">
    <property type="term" value="P:mRNA export from nucleus"/>
    <property type="evidence" value="ECO:0000250"/>
    <property type="project" value="UniProtKB"/>
</dbReference>
<dbReference type="InterPro" id="IPR009782">
    <property type="entry name" value="FYTTD1"/>
</dbReference>
<dbReference type="PANTHER" id="PTHR21038">
    <property type="entry name" value="40-2-3 PROTEIN-RELATED"/>
    <property type="match status" value="1"/>
</dbReference>
<dbReference type="PANTHER" id="PTHR21038:SF2">
    <property type="entry name" value="UAP56-INTERACTING FACTOR"/>
    <property type="match status" value="1"/>
</dbReference>
<dbReference type="Pfam" id="PF07078">
    <property type="entry name" value="FYTT"/>
    <property type="match status" value="1"/>
</dbReference>
<name>UIF_BOVIN</name>
<protein>
    <recommendedName>
        <fullName>UAP56-interacting factor</fullName>
    </recommendedName>
    <alternativeName>
        <fullName>Forty-two-three domain-containing protein 1</fullName>
        <shortName>Protein 40-2-3</shortName>
    </alternativeName>
</protein>
<sequence length="318" mass="35976">MNRFSTRLMGATATPPPAPPKARSNENLDKIDMSLDDIIKLNRKEGKKQNFPRLNRRLQQSSARQFRMRVRWGIQQNSGFGKNSLSRRGRVMPGKRRPYGVITGLAARKATGIRKGISPMNRPPLSDKNIERYFPALKRKANLLRQNEVQRKPVAALKRPNQLNRKNNIPNNFTRSGNKLSHQKDTRQATFLFRRGLKVQAQLNSEQLLDDVVAKRTRQWRTSTTNGGILTVSIDNPGAVQCPVTQKPRLTRTAVPSFLTKRDQSDIKKVPKGVPLQFDINSVGKQTGMTLNERFGILKEQRATLTFNKGGSRFVTVG</sequence>
<reference key="1">
    <citation type="thesis" date="2001" institute="Faculty of Biological Sciences / Goettingen" country="Germany">
        <authorList>
            <person name="Schmidt T."/>
        </authorList>
    </citation>
    <scope>NUCLEOTIDE SEQUENCE [MRNA]</scope>
</reference>
<reference key="2">
    <citation type="submission" date="2006-06" db="EMBL/GenBank/DDBJ databases">
        <authorList>
            <consortium name="NIH - Mammalian Gene Collection (MGC) project"/>
        </authorList>
    </citation>
    <scope>NUCLEOTIDE SEQUENCE [LARGE SCALE MRNA]</scope>
    <source>
        <strain>Hereford</strain>
        <tissue>Thalamus</tissue>
    </source>
</reference>
<evidence type="ECO:0000250" key="1"/>
<evidence type="ECO:0000250" key="2">
    <source>
        <dbReference type="UniProtKB" id="Q91Z49"/>
    </source>
</evidence>
<evidence type="ECO:0000250" key="3">
    <source>
        <dbReference type="UniProtKB" id="Q96QD9"/>
    </source>
</evidence>
<evidence type="ECO:0000256" key="4">
    <source>
        <dbReference type="SAM" id="MobiDB-lite"/>
    </source>
</evidence>
<evidence type="ECO:0000305" key="5"/>
<organism>
    <name type="scientific">Bos taurus</name>
    <name type="common">Bovine</name>
    <dbReference type="NCBI Taxonomy" id="9913"/>
    <lineage>
        <taxon>Eukaryota</taxon>
        <taxon>Metazoa</taxon>
        <taxon>Chordata</taxon>
        <taxon>Craniata</taxon>
        <taxon>Vertebrata</taxon>
        <taxon>Euteleostomi</taxon>
        <taxon>Mammalia</taxon>
        <taxon>Eutheria</taxon>
        <taxon>Laurasiatheria</taxon>
        <taxon>Artiodactyla</taxon>
        <taxon>Ruminantia</taxon>
        <taxon>Pecora</taxon>
        <taxon>Bovidae</taxon>
        <taxon>Bovinae</taxon>
        <taxon>Bos</taxon>
    </lineage>
</organism>
<proteinExistence type="evidence at transcript level"/>
<keyword id="KW-0007">Acetylation</keyword>
<keyword id="KW-1017">Isopeptide bond</keyword>
<keyword id="KW-0509">mRNA transport</keyword>
<keyword id="KW-0539">Nucleus</keyword>
<keyword id="KW-0597">Phosphoprotein</keyword>
<keyword id="KW-1185">Reference proteome</keyword>
<keyword id="KW-0694">RNA-binding</keyword>
<keyword id="KW-0813">Transport</keyword>
<keyword id="KW-0832">Ubl conjugation</keyword>